<comment type="function">
    <text evidence="1">Small subunit of the glutamine-dependent carbamoyl phosphate synthetase (CPSase). CPSase catalyzes the formation of carbamoyl phosphate from the ammonia moiety of glutamine, carbonate, and phosphate donated by ATP, constituting the first step of 2 biosynthetic pathways, one leading to arginine and/or urea and the other to pyrimidine nucleotides. The small subunit (glutamine amidotransferase) binds and cleaves glutamine to supply the large subunit with the substrate ammonia.</text>
</comment>
<comment type="catalytic activity">
    <reaction evidence="1">
        <text>hydrogencarbonate + L-glutamine + 2 ATP + H2O = carbamoyl phosphate + L-glutamate + 2 ADP + phosphate + 2 H(+)</text>
        <dbReference type="Rhea" id="RHEA:18633"/>
        <dbReference type="ChEBI" id="CHEBI:15377"/>
        <dbReference type="ChEBI" id="CHEBI:15378"/>
        <dbReference type="ChEBI" id="CHEBI:17544"/>
        <dbReference type="ChEBI" id="CHEBI:29985"/>
        <dbReference type="ChEBI" id="CHEBI:30616"/>
        <dbReference type="ChEBI" id="CHEBI:43474"/>
        <dbReference type="ChEBI" id="CHEBI:58228"/>
        <dbReference type="ChEBI" id="CHEBI:58359"/>
        <dbReference type="ChEBI" id="CHEBI:456216"/>
        <dbReference type="EC" id="6.3.5.5"/>
    </reaction>
</comment>
<comment type="catalytic activity">
    <molecule>Carbamoyl phosphate synthase small chain</molecule>
    <reaction evidence="1">
        <text>L-glutamine + H2O = L-glutamate + NH4(+)</text>
        <dbReference type="Rhea" id="RHEA:15889"/>
        <dbReference type="ChEBI" id="CHEBI:15377"/>
        <dbReference type="ChEBI" id="CHEBI:28938"/>
        <dbReference type="ChEBI" id="CHEBI:29985"/>
        <dbReference type="ChEBI" id="CHEBI:58359"/>
    </reaction>
</comment>
<comment type="pathway">
    <text evidence="1">Amino-acid biosynthesis; L-arginine biosynthesis; carbamoyl phosphate from bicarbonate: step 1/1.</text>
</comment>
<comment type="pathway">
    <text evidence="1">Pyrimidine metabolism; UMP biosynthesis via de novo pathway; (S)-dihydroorotate from bicarbonate: step 1/3.</text>
</comment>
<comment type="subunit">
    <text evidence="1">Composed of two chains; the small (or glutamine) chain promotes the hydrolysis of glutamine to ammonia, which is used by the large (or ammonia) chain to synthesize carbamoyl phosphate. Tetramer of heterodimers (alpha,beta)4.</text>
</comment>
<comment type="similarity">
    <text evidence="1">Belongs to the CarA family.</text>
</comment>
<sequence>MVSLYLENGLFLQVQSFGASGTQVGELVFNTSMSGYQEVISDPSYKGQFVIFSMPEIGVVGANSKDDESFFSSAGILVRHYNEFFSNSRADFSLSAYLKERGVLGICGVDTRSLIKTLRHHGCLMMVASTIEHDKNKLEEILKNAPRISHTPLVASVSTPKIITHQRATFDFKTLDYKPFDEKNSHKTIAVLDFGAKGNILNELQNVGLKALIYPHHTKANELIKAYEKKEIHGIFLSNGPGDPLSLQQEIGEIKQLIGAKIPMFGICLGHQLLSIAQGYPTYKLKFGHHGSNHPVKNLETNAVEITAQNHNYCVPEAIEKIATITHRNLFDNTIEGVHYKNAPIISVQHHPESSPGPKESHYIFKEFVKLLENFPTRE</sequence>
<reference key="1">
    <citation type="journal article" date="2006" name="PLoS Genet.">
        <title>Who ate whom? Adaptive Helicobacter genomic changes that accompanied a host jump from early humans to large felines.</title>
        <authorList>
            <person name="Eppinger M."/>
            <person name="Baar C."/>
            <person name="Linz B."/>
            <person name="Raddatz G."/>
            <person name="Lanz C."/>
            <person name="Keller H."/>
            <person name="Morelli G."/>
            <person name="Gressmann H."/>
            <person name="Achtman M."/>
            <person name="Schuster S.C."/>
        </authorList>
    </citation>
    <scope>NUCLEOTIDE SEQUENCE [LARGE SCALE GENOMIC DNA]</scope>
    <source>
        <strain>Sheeba</strain>
    </source>
</reference>
<accession>Q17VI1</accession>
<name>CARA_HELAH</name>
<evidence type="ECO:0000255" key="1">
    <source>
        <dbReference type="HAMAP-Rule" id="MF_01209"/>
    </source>
</evidence>
<gene>
    <name evidence="1" type="primary">carA</name>
    <name type="ordered locus">Hac_1638</name>
</gene>
<feature type="chain" id="PRO_1000138861" description="Carbamoyl phosphate synthase small chain">
    <location>
        <begin position="1"/>
        <end position="379"/>
    </location>
</feature>
<feature type="domain" description="Glutamine amidotransferase type-1" evidence="1">
    <location>
        <begin position="188"/>
        <end position="378"/>
    </location>
</feature>
<feature type="region of interest" description="CPSase" evidence="1">
    <location>
        <begin position="1"/>
        <end position="184"/>
    </location>
</feature>
<feature type="active site" description="Nucleophile" evidence="1">
    <location>
        <position position="268"/>
    </location>
</feature>
<feature type="active site" evidence="1">
    <location>
        <position position="351"/>
    </location>
</feature>
<feature type="active site" evidence="1">
    <location>
        <position position="353"/>
    </location>
</feature>
<feature type="binding site" evidence="1">
    <location>
        <position position="44"/>
    </location>
    <ligand>
        <name>L-glutamine</name>
        <dbReference type="ChEBI" id="CHEBI:58359"/>
    </ligand>
</feature>
<feature type="binding site" evidence="1">
    <location>
        <position position="240"/>
    </location>
    <ligand>
        <name>L-glutamine</name>
        <dbReference type="ChEBI" id="CHEBI:58359"/>
    </ligand>
</feature>
<feature type="binding site" evidence="1">
    <location>
        <position position="242"/>
    </location>
    <ligand>
        <name>L-glutamine</name>
        <dbReference type="ChEBI" id="CHEBI:58359"/>
    </ligand>
</feature>
<feature type="binding site" evidence="1">
    <location>
        <position position="269"/>
    </location>
    <ligand>
        <name>L-glutamine</name>
        <dbReference type="ChEBI" id="CHEBI:58359"/>
    </ligand>
</feature>
<feature type="binding site" evidence="1">
    <location>
        <position position="272"/>
    </location>
    <ligand>
        <name>L-glutamine</name>
        <dbReference type="ChEBI" id="CHEBI:58359"/>
    </ligand>
</feature>
<feature type="binding site" evidence="1">
    <location>
        <position position="310"/>
    </location>
    <ligand>
        <name>L-glutamine</name>
        <dbReference type="ChEBI" id="CHEBI:58359"/>
    </ligand>
</feature>
<feature type="binding site" evidence="1">
    <location>
        <position position="313"/>
    </location>
    <ligand>
        <name>L-glutamine</name>
        <dbReference type="ChEBI" id="CHEBI:58359"/>
    </ligand>
</feature>
<proteinExistence type="inferred from homology"/>
<protein>
    <recommendedName>
        <fullName evidence="1">Carbamoyl phosphate synthase small chain</fullName>
        <ecNumber evidence="1">6.3.5.5</ecNumber>
    </recommendedName>
    <alternativeName>
        <fullName evidence="1">Carbamoyl phosphate synthetase glutamine chain</fullName>
    </alternativeName>
</protein>
<organism>
    <name type="scientific">Helicobacter acinonychis (strain Sheeba)</name>
    <dbReference type="NCBI Taxonomy" id="382638"/>
    <lineage>
        <taxon>Bacteria</taxon>
        <taxon>Pseudomonadati</taxon>
        <taxon>Campylobacterota</taxon>
        <taxon>Epsilonproteobacteria</taxon>
        <taxon>Campylobacterales</taxon>
        <taxon>Helicobacteraceae</taxon>
        <taxon>Helicobacter</taxon>
    </lineage>
</organism>
<keyword id="KW-0028">Amino-acid biosynthesis</keyword>
<keyword id="KW-0055">Arginine biosynthesis</keyword>
<keyword id="KW-0067">ATP-binding</keyword>
<keyword id="KW-0315">Glutamine amidotransferase</keyword>
<keyword id="KW-0436">Ligase</keyword>
<keyword id="KW-0547">Nucleotide-binding</keyword>
<keyword id="KW-0665">Pyrimidine biosynthesis</keyword>
<dbReference type="EC" id="6.3.5.5" evidence="1"/>
<dbReference type="EMBL" id="AM260522">
    <property type="protein sequence ID" value="CAK00345.1"/>
    <property type="molecule type" value="Genomic_DNA"/>
</dbReference>
<dbReference type="RefSeq" id="WP_011578428.1">
    <property type="nucleotide sequence ID" value="NC_008229.1"/>
</dbReference>
<dbReference type="SMR" id="Q17VI1"/>
<dbReference type="STRING" id="382638.Hac_1638"/>
<dbReference type="MEROPS" id="C26.954"/>
<dbReference type="GeneID" id="31758889"/>
<dbReference type="KEGG" id="hac:Hac_1638"/>
<dbReference type="eggNOG" id="COG0505">
    <property type="taxonomic scope" value="Bacteria"/>
</dbReference>
<dbReference type="HOGENOM" id="CLU_035901_2_1_7"/>
<dbReference type="OrthoDB" id="9804328at2"/>
<dbReference type="BioCyc" id="HACI382638:HAC_RS06950-MONOMER"/>
<dbReference type="UniPathway" id="UPA00068">
    <property type="reaction ID" value="UER00171"/>
</dbReference>
<dbReference type="UniPathway" id="UPA00070">
    <property type="reaction ID" value="UER00115"/>
</dbReference>
<dbReference type="Proteomes" id="UP000000775">
    <property type="component" value="Chromosome"/>
</dbReference>
<dbReference type="GO" id="GO:0005524">
    <property type="term" value="F:ATP binding"/>
    <property type="evidence" value="ECO:0007669"/>
    <property type="project" value="UniProtKB-UniRule"/>
</dbReference>
<dbReference type="GO" id="GO:0004088">
    <property type="term" value="F:carbamoyl-phosphate synthase (glutamine-hydrolyzing) activity"/>
    <property type="evidence" value="ECO:0007669"/>
    <property type="project" value="UniProtKB-UniRule"/>
</dbReference>
<dbReference type="GO" id="GO:0004359">
    <property type="term" value="F:glutaminase activity"/>
    <property type="evidence" value="ECO:0007669"/>
    <property type="project" value="RHEA"/>
</dbReference>
<dbReference type="GO" id="GO:0006207">
    <property type="term" value="P:'de novo' pyrimidine nucleobase biosynthetic process"/>
    <property type="evidence" value="ECO:0007669"/>
    <property type="project" value="InterPro"/>
</dbReference>
<dbReference type="GO" id="GO:0044205">
    <property type="term" value="P:'de novo' UMP biosynthetic process"/>
    <property type="evidence" value="ECO:0007669"/>
    <property type="project" value="UniProtKB-UniRule"/>
</dbReference>
<dbReference type="GO" id="GO:0006541">
    <property type="term" value="P:glutamine metabolic process"/>
    <property type="evidence" value="ECO:0007669"/>
    <property type="project" value="InterPro"/>
</dbReference>
<dbReference type="GO" id="GO:0006526">
    <property type="term" value="P:L-arginine biosynthetic process"/>
    <property type="evidence" value="ECO:0007669"/>
    <property type="project" value="UniProtKB-UniRule"/>
</dbReference>
<dbReference type="CDD" id="cd01744">
    <property type="entry name" value="GATase1_CPSase"/>
    <property type="match status" value="1"/>
</dbReference>
<dbReference type="Gene3D" id="3.40.50.880">
    <property type="match status" value="1"/>
</dbReference>
<dbReference type="Gene3D" id="3.50.30.20">
    <property type="entry name" value="Carbamoyl-phosphate synthase small subunit, N-terminal domain"/>
    <property type="match status" value="1"/>
</dbReference>
<dbReference type="HAMAP" id="MF_01209">
    <property type="entry name" value="CPSase_S_chain"/>
    <property type="match status" value="1"/>
</dbReference>
<dbReference type="InterPro" id="IPR050472">
    <property type="entry name" value="Anth_synth/Amidotransfase"/>
</dbReference>
<dbReference type="InterPro" id="IPR006274">
    <property type="entry name" value="CarbamoylP_synth_ssu"/>
</dbReference>
<dbReference type="InterPro" id="IPR002474">
    <property type="entry name" value="CarbamoylP_synth_ssu_N"/>
</dbReference>
<dbReference type="InterPro" id="IPR036480">
    <property type="entry name" value="CarbP_synth_ssu_N_sf"/>
</dbReference>
<dbReference type="InterPro" id="IPR029062">
    <property type="entry name" value="Class_I_gatase-like"/>
</dbReference>
<dbReference type="InterPro" id="IPR035686">
    <property type="entry name" value="CPSase_GATase1"/>
</dbReference>
<dbReference type="InterPro" id="IPR017926">
    <property type="entry name" value="GATASE"/>
</dbReference>
<dbReference type="NCBIfam" id="TIGR01368">
    <property type="entry name" value="CPSaseIIsmall"/>
    <property type="match status" value="1"/>
</dbReference>
<dbReference type="NCBIfam" id="NF009475">
    <property type="entry name" value="PRK12838.1"/>
    <property type="match status" value="1"/>
</dbReference>
<dbReference type="PANTHER" id="PTHR43418:SF7">
    <property type="entry name" value="CARBAMOYL-PHOSPHATE SYNTHASE SMALL CHAIN"/>
    <property type="match status" value="1"/>
</dbReference>
<dbReference type="PANTHER" id="PTHR43418">
    <property type="entry name" value="MULTIFUNCTIONAL TRYPTOPHAN BIOSYNTHESIS PROTEIN-RELATED"/>
    <property type="match status" value="1"/>
</dbReference>
<dbReference type="Pfam" id="PF00988">
    <property type="entry name" value="CPSase_sm_chain"/>
    <property type="match status" value="1"/>
</dbReference>
<dbReference type="Pfam" id="PF00117">
    <property type="entry name" value="GATase"/>
    <property type="match status" value="1"/>
</dbReference>
<dbReference type="PRINTS" id="PR00097">
    <property type="entry name" value="ANTSNTHASEII"/>
</dbReference>
<dbReference type="PRINTS" id="PR00099">
    <property type="entry name" value="CPSGATASE"/>
</dbReference>
<dbReference type="PRINTS" id="PR00096">
    <property type="entry name" value="GATASE"/>
</dbReference>
<dbReference type="SMART" id="SM01097">
    <property type="entry name" value="CPSase_sm_chain"/>
    <property type="match status" value="1"/>
</dbReference>
<dbReference type="SUPFAM" id="SSF52021">
    <property type="entry name" value="Carbamoyl phosphate synthetase, small subunit N-terminal domain"/>
    <property type="match status" value="1"/>
</dbReference>
<dbReference type="SUPFAM" id="SSF52317">
    <property type="entry name" value="Class I glutamine amidotransferase-like"/>
    <property type="match status" value="1"/>
</dbReference>
<dbReference type="PROSITE" id="PS51273">
    <property type="entry name" value="GATASE_TYPE_1"/>
    <property type="match status" value="1"/>
</dbReference>